<sequence length="216" mass="24692">MPISSLVPLTEIRQYCLQLGFSLSDQEIESLRGYLCLLTKWNKVMNLVGFTTWKTICSNLIIDSFHLAIFIRSLSLPTDPLCWDFGSGAGLPGIPLRIIWKEGSYWLVESREKRAIFLKTLLAQYPLTQTYVYCGRVEEFMLANCLSDVALIVSRAFMPWQALLKLIEKKISFKGVIVLLLNDIPKNIDSCWYIQTTYPYSIGGEKRFFVALKKAS</sequence>
<proteinExistence type="inferred from homology"/>
<keyword id="KW-0963">Cytoplasm</keyword>
<keyword id="KW-0489">Methyltransferase</keyword>
<keyword id="KW-1185">Reference proteome</keyword>
<keyword id="KW-0698">rRNA processing</keyword>
<keyword id="KW-0949">S-adenosyl-L-methionine</keyword>
<keyword id="KW-0808">Transferase</keyword>
<name>RSMG_LAWIP</name>
<dbReference type="EC" id="2.1.1.170" evidence="1"/>
<dbReference type="EMBL" id="AM180252">
    <property type="protein sequence ID" value="CAJ54486.1"/>
    <property type="molecule type" value="Genomic_DNA"/>
</dbReference>
<dbReference type="RefSeq" id="WP_011526516.1">
    <property type="nucleotide sequence ID" value="NC_008011.1"/>
</dbReference>
<dbReference type="SMR" id="Q1MR90"/>
<dbReference type="STRING" id="363253.LI0432"/>
<dbReference type="KEGG" id="lip:LI0432"/>
<dbReference type="eggNOG" id="COG0357">
    <property type="taxonomic scope" value="Bacteria"/>
</dbReference>
<dbReference type="HOGENOM" id="CLU_065341_2_3_7"/>
<dbReference type="OrthoDB" id="9808773at2"/>
<dbReference type="Proteomes" id="UP000002430">
    <property type="component" value="Chromosome"/>
</dbReference>
<dbReference type="GO" id="GO:0005829">
    <property type="term" value="C:cytosol"/>
    <property type="evidence" value="ECO:0007669"/>
    <property type="project" value="TreeGrafter"/>
</dbReference>
<dbReference type="GO" id="GO:0070043">
    <property type="term" value="F:rRNA (guanine-N7-)-methyltransferase activity"/>
    <property type="evidence" value="ECO:0007669"/>
    <property type="project" value="UniProtKB-UniRule"/>
</dbReference>
<dbReference type="Gene3D" id="3.40.50.150">
    <property type="entry name" value="Vaccinia Virus protein VP39"/>
    <property type="match status" value="1"/>
</dbReference>
<dbReference type="HAMAP" id="MF_00074">
    <property type="entry name" value="16SrRNA_methyltr_G"/>
    <property type="match status" value="1"/>
</dbReference>
<dbReference type="InterPro" id="IPR003682">
    <property type="entry name" value="rRNA_ssu_MeTfrase_G"/>
</dbReference>
<dbReference type="InterPro" id="IPR029063">
    <property type="entry name" value="SAM-dependent_MTases_sf"/>
</dbReference>
<dbReference type="PANTHER" id="PTHR31760">
    <property type="entry name" value="S-ADENOSYL-L-METHIONINE-DEPENDENT METHYLTRANSFERASES SUPERFAMILY PROTEIN"/>
    <property type="match status" value="1"/>
</dbReference>
<dbReference type="PANTHER" id="PTHR31760:SF0">
    <property type="entry name" value="S-ADENOSYL-L-METHIONINE-DEPENDENT METHYLTRANSFERASES SUPERFAMILY PROTEIN"/>
    <property type="match status" value="1"/>
</dbReference>
<dbReference type="Pfam" id="PF02527">
    <property type="entry name" value="GidB"/>
    <property type="match status" value="1"/>
</dbReference>
<dbReference type="SUPFAM" id="SSF53335">
    <property type="entry name" value="S-adenosyl-L-methionine-dependent methyltransferases"/>
    <property type="match status" value="1"/>
</dbReference>
<evidence type="ECO:0000255" key="1">
    <source>
        <dbReference type="HAMAP-Rule" id="MF_00074"/>
    </source>
</evidence>
<organism>
    <name type="scientific">Lawsonia intracellularis (strain PHE/MN1-00)</name>
    <dbReference type="NCBI Taxonomy" id="363253"/>
    <lineage>
        <taxon>Bacteria</taxon>
        <taxon>Pseudomonadati</taxon>
        <taxon>Thermodesulfobacteriota</taxon>
        <taxon>Desulfovibrionia</taxon>
        <taxon>Desulfovibrionales</taxon>
        <taxon>Desulfovibrionaceae</taxon>
        <taxon>Lawsonia</taxon>
    </lineage>
</organism>
<gene>
    <name evidence="1" type="primary">rsmG</name>
    <name type="ordered locus">LI0432</name>
</gene>
<accession>Q1MR90</accession>
<feature type="chain" id="PRO_0000342918" description="Ribosomal RNA small subunit methyltransferase G">
    <location>
        <begin position="1"/>
        <end position="216"/>
    </location>
</feature>
<feature type="binding site" evidence="1">
    <location>
        <position position="86"/>
    </location>
    <ligand>
        <name>S-adenosyl-L-methionine</name>
        <dbReference type="ChEBI" id="CHEBI:59789"/>
    </ligand>
</feature>
<feature type="binding site" evidence="1">
    <location>
        <position position="91"/>
    </location>
    <ligand>
        <name>S-adenosyl-L-methionine</name>
        <dbReference type="ChEBI" id="CHEBI:59789"/>
    </ligand>
</feature>
<feature type="binding site" evidence="1">
    <location>
        <begin position="137"/>
        <end position="138"/>
    </location>
    <ligand>
        <name>S-adenosyl-L-methionine</name>
        <dbReference type="ChEBI" id="CHEBI:59789"/>
    </ligand>
</feature>
<feature type="binding site" evidence="1">
    <location>
        <position position="155"/>
    </location>
    <ligand>
        <name>S-adenosyl-L-methionine</name>
        <dbReference type="ChEBI" id="CHEBI:59789"/>
    </ligand>
</feature>
<protein>
    <recommendedName>
        <fullName evidence="1">Ribosomal RNA small subunit methyltransferase G</fullName>
        <ecNumber evidence="1">2.1.1.170</ecNumber>
    </recommendedName>
    <alternativeName>
        <fullName evidence="1">16S rRNA 7-methylguanosine methyltransferase</fullName>
        <shortName evidence="1">16S rRNA m7G methyltransferase</shortName>
    </alternativeName>
</protein>
<comment type="function">
    <text evidence="1">Specifically methylates the N7 position of guanine in position 527 of 16S rRNA.</text>
</comment>
<comment type="catalytic activity">
    <reaction evidence="1">
        <text>guanosine(527) in 16S rRNA + S-adenosyl-L-methionine = N(7)-methylguanosine(527) in 16S rRNA + S-adenosyl-L-homocysteine</text>
        <dbReference type="Rhea" id="RHEA:42732"/>
        <dbReference type="Rhea" id="RHEA-COMP:10209"/>
        <dbReference type="Rhea" id="RHEA-COMP:10210"/>
        <dbReference type="ChEBI" id="CHEBI:57856"/>
        <dbReference type="ChEBI" id="CHEBI:59789"/>
        <dbReference type="ChEBI" id="CHEBI:74269"/>
        <dbReference type="ChEBI" id="CHEBI:74480"/>
        <dbReference type="EC" id="2.1.1.170"/>
    </reaction>
</comment>
<comment type="subcellular location">
    <subcellularLocation>
        <location evidence="1">Cytoplasm</location>
    </subcellularLocation>
</comment>
<comment type="similarity">
    <text evidence="1">Belongs to the methyltransferase superfamily. RNA methyltransferase RsmG family.</text>
</comment>
<reference key="1">
    <citation type="submission" date="2005-11" db="EMBL/GenBank/DDBJ databases">
        <title>The complete genome sequence of Lawsonia intracellularis: the causative agent of proliferative enteropathy.</title>
        <authorList>
            <person name="Kaur K."/>
            <person name="Zhang Q."/>
            <person name="Beckler D."/>
            <person name="Munir S."/>
            <person name="Li L."/>
            <person name="Kinsley K."/>
            <person name="Herron L."/>
            <person name="Peterson A."/>
            <person name="May B."/>
            <person name="Singh S."/>
            <person name="Gebhart C."/>
            <person name="Kapur V."/>
        </authorList>
    </citation>
    <scope>NUCLEOTIDE SEQUENCE [LARGE SCALE GENOMIC DNA]</scope>
    <source>
        <strain>PHE/MN1-00</strain>
    </source>
</reference>